<protein>
    <recommendedName>
        <fullName evidence="1">Phosphoribosyl-AMP cyclohydrolase</fullName>
        <shortName evidence="1">PRA-CH</shortName>
        <ecNumber evidence="1">3.5.4.19</ecNumber>
    </recommendedName>
</protein>
<name>HIS3_METST</name>
<feature type="chain" id="PRO_0000319733" description="Phosphoribosyl-AMP cyclohydrolase">
    <location>
        <begin position="1"/>
        <end position="129"/>
    </location>
</feature>
<feature type="binding site" evidence="1">
    <location>
        <position position="77"/>
    </location>
    <ligand>
        <name>Mg(2+)</name>
        <dbReference type="ChEBI" id="CHEBI:18420"/>
    </ligand>
</feature>
<feature type="binding site" evidence="1">
    <location>
        <position position="78"/>
    </location>
    <ligand>
        <name>Zn(2+)</name>
        <dbReference type="ChEBI" id="CHEBI:29105"/>
        <note>ligand shared between dimeric partners</note>
    </ligand>
</feature>
<feature type="binding site" evidence="1">
    <location>
        <position position="79"/>
    </location>
    <ligand>
        <name>Mg(2+)</name>
        <dbReference type="ChEBI" id="CHEBI:18420"/>
    </ligand>
</feature>
<feature type="binding site" evidence="1">
    <location>
        <position position="81"/>
    </location>
    <ligand>
        <name>Mg(2+)</name>
        <dbReference type="ChEBI" id="CHEBI:18420"/>
    </ligand>
</feature>
<feature type="binding site" evidence="1">
    <location>
        <position position="94"/>
    </location>
    <ligand>
        <name>Zn(2+)</name>
        <dbReference type="ChEBI" id="CHEBI:29105"/>
        <note>ligand shared between dimeric partners</note>
    </ligand>
</feature>
<feature type="binding site" evidence="1">
    <location>
        <position position="101"/>
    </location>
    <ligand>
        <name>Zn(2+)</name>
        <dbReference type="ChEBI" id="CHEBI:29105"/>
        <note>ligand shared between dimeric partners</note>
    </ligand>
</feature>
<comment type="function">
    <text evidence="1">Catalyzes the hydrolysis of the adenine ring of phosphoribosyl-AMP.</text>
</comment>
<comment type="catalytic activity">
    <reaction evidence="1">
        <text>1-(5-phospho-beta-D-ribosyl)-5'-AMP + H2O = 1-(5-phospho-beta-D-ribosyl)-5-[(5-phospho-beta-D-ribosylamino)methylideneamino]imidazole-4-carboxamide</text>
        <dbReference type="Rhea" id="RHEA:20049"/>
        <dbReference type="ChEBI" id="CHEBI:15377"/>
        <dbReference type="ChEBI" id="CHEBI:58435"/>
        <dbReference type="ChEBI" id="CHEBI:59457"/>
        <dbReference type="EC" id="3.5.4.19"/>
    </reaction>
</comment>
<comment type="cofactor">
    <cofactor evidence="1">
        <name>Mg(2+)</name>
        <dbReference type="ChEBI" id="CHEBI:18420"/>
    </cofactor>
    <text evidence="1">Binds 1 Mg(2+) ion per subunit.</text>
</comment>
<comment type="cofactor">
    <cofactor evidence="1">
        <name>Zn(2+)</name>
        <dbReference type="ChEBI" id="CHEBI:29105"/>
    </cofactor>
    <text evidence="1">Binds 1 zinc ion per subunit.</text>
</comment>
<comment type="pathway">
    <text evidence="1">Amino-acid biosynthesis; L-histidine biosynthesis; L-histidine from 5-phospho-alpha-D-ribose 1-diphosphate: step 3/9.</text>
</comment>
<comment type="subunit">
    <text evidence="1">Homodimer.</text>
</comment>
<comment type="subcellular location">
    <subcellularLocation>
        <location evidence="1">Cytoplasm</location>
    </subcellularLocation>
</comment>
<comment type="similarity">
    <text evidence="1">Belongs to the PRA-CH family.</text>
</comment>
<gene>
    <name evidence="1" type="primary">hisI</name>
    <name type="ordered locus">Msp_0649</name>
</gene>
<keyword id="KW-0028">Amino-acid biosynthesis</keyword>
<keyword id="KW-0963">Cytoplasm</keyword>
<keyword id="KW-0368">Histidine biosynthesis</keyword>
<keyword id="KW-0378">Hydrolase</keyword>
<keyword id="KW-0460">Magnesium</keyword>
<keyword id="KW-0479">Metal-binding</keyword>
<keyword id="KW-1185">Reference proteome</keyword>
<keyword id="KW-0862">Zinc</keyword>
<dbReference type="EC" id="3.5.4.19" evidence="1"/>
<dbReference type="EMBL" id="CP000102">
    <property type="protein sequence ID" value="ABC57047.1"/>
    <property type="molecule type" value="Genomic_DNA"/>
</dbReference>
<dbReference type="SMR" id="Q2NGK6"/>
<dbReference type="STRING" id="339860.Msp_0649"/>
<dbReference type="KEGG" id="mst:Msp_0649"/>
<dbReference type="eggNOG" id="arCOG02676">
    <property type="taxonomic scope" value="Archaea"/>
</dbReference>
<dbReference type="HOGENOM" id="CLU_048577_5_0_2"/>
<dbReference type="UniPathway" id="UPA00031">
    <property type="reaction ID" value="UER00008"/>
</dbReference>
<dbReference type="Proteomes" id="UP000001931">
    <property type="component" value="Chromosome"/>
</dbReference>
<dbReference type="GO" id="GO:0005737">
    <property type="term" value="C:cytoplasm"/>
    <property type="evidence" value="ECO:0007669"/>
    <property type="project" value="UniProtKB-SubCell"/>
</dbReference>
<dbReference type="GO" id="GO:0000287">
    <property type="term" value="F:magnesium ion binding"/>
    <property type="evidence" value="ECO:0007669"/>
    <property type="project" value="UniProtKB-UniRule"/>
</dbReference>
<dbReference type="GO" id="GO:0004635">
    <property type="term" value="F:phosphoribosyl-AMP cyclohydrolase activity"/>
    <property type="evidence" value="ECO:0007669"/>
    <property type="project" value="UniProtKB-UniRule"/>
</dbReference>
<dbReference type="GO" id="GO:0008270">
    <property type="term" value="F:zinc ion binding"/>
    <property type="evidence" value="ECO:0007669"/>
    <property type="project" value="UniProtKB-UniRule"/>
</dbReference>
<dbReference type="GO" id="GO:0000105">
    <property type="term" value="P:L-histidine biosynthetic process"/>
    <property type="evidence" value="ECO:0007669"/>
    <property type="project" value="UniProtKB-UniRule"/>
</dbReference>
<dbReference type="FunFam" id="3.10.20.810:FF:000001">
    <property type="entry name" value="Histidine biosynthesis bifunctional protein HisIE"/>
    <property type="match status" value="1"/>
</dbReference>
<dbReference type="Gene3D" id="3.10.20.810">
    <property type="entry name" value="Phosphoribosyl-AMP cyclohydrolase"/>
    <property type="match status" value="1"/>
</dbReference>
<dbReference type="HAMAP" id="MF_01021">
    <property type="entry name" value="HisI"/>
    <property type="match status" value="1"/>
</dbReference>
<dbReference type="InterPro" id="IPR026660">
    <property type="entry name" value="PRA-CH"/>
</dbReference>
<dbReference type="InterPro" id="IPR002496">
    <property type="entry name" value="PRib_AMP_CycHydrolase_dom"/>
</dbReference>
<dbReference type="InterPro" id="IPR038019">
    <property type="entry name" value="PRib_AMP_CycHydrolase_sf"/>
</dbReference>
<dbReference type="NCBIfam" id="NF000768">
    <property type="entry name" value="PRK00051.1"/>
    <property type="match status" value="1"/>
</dbReference>
<dbReference type="PANTHER" id="PTHR42945">
    <property type="entry name" value="HISTIDINE BIOSYNTHESIS BIFUNCTIONAL PROTEIN"/>
    <property type="match status" value="1"/>
</dbReference>
<dbReference type="PANTHER" id="PTHR42945:SF1">
    <property type="entry name" value="HISTIDINE BIOSYNTHESIS BIFUNCTIONAL PROTEIN HIS7"/>
    <property type="match status" value="1"/>
</dbReference>
<dbReference type="Pfam" id="PF01502">
    <property type="entry name" value="PRA-CH"/>
    <property type="match status" value="1"/>
</dbReference>
<dbReference type="SUPFAM" id="SSF141734">
    <property type="entry name" value="HisI-like"/>
    <property type="match status" value="1"/>
</dbReference>
<reference key="1">
    <citation type="journal article" date="2006" name="J. Bacteriol.">
        <title>The genome sequence of Methanosphaera stadtmanae reveals why this human intestinal archaeon is restricted to methanol and H2 for methane formation and ATP synthesis.</title>
        <authorList>
            <person name="Fricke W.F."/>
            <person name="Seedorf H."/>
            <person name="Henne A."/>
            <person name="Kruer M."/>
            <person name="Liesegang H."/>
            <person name="Hedderich R."/>
            <person name="Gottschalk G."/>
            <person name="Thauer R.K."/>
        </authorList>
    </citation>
    <scope>NUCLEOTIDE SEQUENCE [LARGE SCALE GENOMIC DNA]</scope>
    <source>
        <strain>ATCC 43021 / DSM 3091 / JCM 11832 / MCB-3</strain>
    </source>
</reference>
<sequence>MIKPNFRHIINGKRLATAIAQDYKTGEILMVAFIDEEAFNKTIQTRKAHYYSTSRNMIWYKGEESGHIQEIKEVLLDCDEDAIIFKVKQVGGACHTGHYSCFYKKLSDDGEVVTEYEDKVFDPEDVYEK</sequence>
<proteinExistence type="inferred from homology"/>
<evidence type="ECO:0000255" key="1">
    <source>
        <dbReference type="HAMAP-Rule" id="MF_01021"/>
    </source>
</evidence>
<accession>Q2NGK6</accession>
<organism>
    <name type="scientific">Methanosphaera stadtmanae (strain ATCC 43021 / DSM 3091 / JCM 11832 / MCB-3)</name>
    <dbReference type="NCBI Taxonomy" id="339860"/>
    <lineage>
        <taxon>Archaea</taxon>
        <taxon>Methanobacteriati</taxon>
        <taxon>Methanobacteriota</taxon>
        <taxon>Methanomada group</taxon>
        <taxon>Methanobacteria</taxon>
        <taxon>Methanobacteriales</taxon>
        <taxon>Methanobacteriaceae</taxon>
        <taxon>Methanosphaera</taxon>
    </lineage>
</organism>